<protein>
    <recommendedName>
        <fullName evidence="3">Neurotrophic factor BDNF precursor form</fullName>
        <shortName>proBDNF</shortName>
    </recommendedName>
    <alternativeName>
        <fullName>Brain-derived neurotrophic factor</fullName>
    </alternativeName>
    <component>
        <recommendedName>
            <fullName>Neurotrophic factor BDNF</fullName>
        </recommendedName>
    </component>
</protein>
<gene>
    <name type="primary">bdnf</name>
</gene>
<keyword id="KW-0165">Cleavage on pair of basic residues</keyword>
<keyword id="KW-1015">Disulfide bond</keyword>
<keyword id="KW-0325">Glycoprotein</keyword>
<keyword id="KW-0339">Growth factor</keyword>
<keyword id="KW-1185">Reference proteome</keyword>
<keyword id="KW-0964">Secreted</keyword>
<keyword id="KW-0732">Signal</keyword>
<feature type="signal peptide" evidence="2">
    <location>
        <begin position="1"/>
        <end position="18"/>
    </location>
</feature>
<feature type="propeptide" id="PRO_0000019651" evidence="1">
    <location>
        <begin position="19"/>
        <end position="151"/>
    </location>
</feature>
<feature type="chain" id="PRO_0000019652" description="Neurotrophic factor BDNF">
    <location>
        <begin position="152"/>
        <end position="270"/>
    </location>
</feature>
<feature type="glycosylation site" description="N-linked (GlcNAc...) asparagine" evidence="2">
    <location>
        <position position="144"/>
    </location>
</feature>
<feature type="disulfide bond" evidence="1">
    <location>
        <begin position="164"/>
        <end position="231"/>
    </location>
</feature>
<feature type="disulfide bond" evidence="1">
    <location>
        <begin position="209"/>
        <end position="260"/>
    </location>
</feature>
<feature type="disulfide bond" evidence="1">
    <location>
        <begin position="219"/>
        <end position="262"/>
    </location>
</feature>
<name>BDNF_CYPCA</name>
<accession>Q90322</accession>
<organism>
    <name type="scientific">Cyprinus carpio</name>
    <name type="common">Common carp</name>
    <dbReference type="NCBI Taxonomy" id="7962"/>
    <lineage>
        <taxon>Eukaryota</taxon>
        <taxon>Metazoa</taxon>
        <taxon>Chordata</taxon>
        <taxon>Craniata</taxon>
        <taxon>Vertebrata</taxon>
        <taxon>Euteleostomi</taxon>
        <taxon>Actinopterygii</taxon>
        <taxon>Neopterygii</taxon>
        <taxon>Teleostei</taxon>
        <taxon>Ostariophysi</taxon>
        <taxon>Cypriniformes</taxon>
        <taxon>Cyprinidae</taxon>
        <taxon>Cyprininae</taxon>
        <taxon>Cyprinus</taxon>
    </lineage>
</organism>
<sequence>MTILFVTMVISYFSCMRAAPMREIPGVQGGHRAEGYLGAAAAAAAAITSGSRGHGTPQSGGGLPWLTDTFEQVIEELLEVEGEATQQLGPGADQGQGGGGPAAMADSKDVDMYASRVMISNQVPLEPPLLFLLEEYKNYLDAANMSMRVRRHSDPARRGELSVCDSISQWVTALDKKTAIDMSGQTVTVLEKVPVTNGQLKQYFYETKCNPLGYTKEGCRGIDKRHYNSQCRTTQSYVRALTMDSKRKIGWRFIRIDTSCVCTLTIKRGR</sequence>
<dbReference type="EMBL" id="L27171">
    <property type="protein sequence ID" value="AAA49204.1"/>
    <property type="molecule type" value="Genomic_DNA"/>
</dbReference>
<dbReference type="SMR" id="Q90322"/>
<dbReference type="GlyCosmos" id="Q90322">
    <property type="glycosylation" value="1 site, No reported glycans"/>
</dbReference>
<dbReference type="Proteomes" id="UP000694384">
    <property type="component" value="Unplaced"/>
</dbReference>
<dbReference type="Proteomes" id="UP000694427">
    <property type="component" value="Unplaced"/>
</dbReference>
<dbReference type="Proteomes" id="UP000694700">
    <property type="component" value="Unplaced"/>
</dbReference>
<dbReference type="Proteomes" id="UP000694701">
    <property type="component" value="Unplaced"/>
</dbReference>
<dbReference type="Proteomes" id="UP001155660">
    <property type="component" value="Unplaced"/>
</dbReference>
<dbReference type="GO" id="GO:0030424">
    <property type="term" value="C:axon"/>
    <property type="evidence" value="ECO:0007669"/>
    <property type="project" value="TreeGrafter"/>
</dbReference>
<dbReference type="GO" id="GO:0030425">
    <property type="term" value="C:dendrite"/>
    <property type="evidence" value="ECO:0007669"/>
    <property type="project" value="TreeGrafter"/>
</dbReference>
<dbReference type="GO" id="GO:0005615">
    <property type="term" value="C:extracellular space"/>
    <property type="evidence" value="ECO:0007669"/>
    <property type="project" value="TreeGrafter"/>
</dbReference>
<dbReference type="GO" id="GO:0008021">
    <property type="term" value="C:synaptic vesicle"/>
    <property type="evidence" value="ECO:0007669"/>
    <property type="project" value="TreeGrafter"/>
</dbReference>
<dbReference type="GO" id="GO:0008083">
    <property type="term" value="F:growth factor activity"/>
    <property type="evidence" value="ECO:0007669"/>
    <property type="project" value="UniProtKB-KW"/>
</dbReference>
<dbReference type="GO" id="GO:0005163">
    <property type="term" value="F:nerve growth factor receptor binding"/>
    <property type="evidence" value="ECO:0007669"/>
    <property type="project" value="TreeGrafter"/>
</dbReference>
<dbReference type="GO" id="GO:0007169">
    <property type="term" value="P:cell surface receptor protein tyrosine kinase signaling pathway"/>
    <property type="evidence" value="ECO:0007669"/>
    <property type="project" value="TreeGrafter"/>
</dbReference>
<dbReference type="GO" id="GO:0050804">
    <property type="term" value="P:modulation of chemical synaptic transmission"/>
    <property type="evidence" value="ECO:0007669"/>
    <property type="project" value="TreeGrafter"/>
</dbReference>
<dbReference type="GO" id="GO:0043524">
    <property type="term" value="P:negative regulation of neuron apoptotic process"/>
    <property type="evidence" value="ECO:0007669"/>
    <property type="project" value="TreeGrafter"/>
</dbReference>
<dbReference type="GO" id="GO:0021675">
    <property type="term" value="P:nerve development"/>
    <property type="evidence" value="ECO:0007669"/>
    <property type="project" value="TreeGrafter"/>
</dbReference>
<dbReference type="GO" id="GO:0038180">
    <property type="term" value="P:nerve growth factor signaling pathway"/>
    <property type="evidence" value="ECO:0007669"/>
    <property type="project" value="TreeGrafter"/>
</dbReference>
<dbReference type="GO" id="GO:0048812">
    <property type="term" value="P:neuron projection morphogenesis"/>
    <property type="evidence" value="ECO:0007669"/>
    <property type="project" value="TreeGrafter"/>
</dbReference>
<dbReference type="FunFam" id="2.10.90.10:FF:000002">
    <property type="entry name" value="Brain-derived neurotrophic factor"/>
    <property type="match status" value="1"/>
</dbReference>
<dbReference type="Gene3D" id="2.10.90.10">
    <property type="entry name" value="Cystine-knot cytokines"/>
    <property type="match status" value="1"/>
</dbReference>
<dbReference type="InterPro" id="IPR020430">
    <property type="entry name" value="Brain-der_neurotrophic_factor"/>
</dbReference>
<dbReference type="InterPro" id="IPR029034">
    <property type="entry name" value="Cystine-knot_cytokine"/>
</dbReference>
<dbReference type="InterPro" id="IPR020408">
    <property type="entry name" value="Nerve_growth_factor-like"/>
</dbReference>
<dbReference type="InterPro" id="IPR002072">
    <property type="entry name" value="Nerve_growth_factor-rel"/>
</dbReference>
<dbReference type="InterPro" id="IPR019846">
    <property type="entry name" value="Nerve_growth_factor_CS"/>
</dbReference>
<dbReference type="PANTHER" id="PTHR11589:SF3">
    <property type="entry name" value="BRAIN-DERIVED NEUROTROPHIC FACTOR"/>
    <property type="match status" value="1"/>
</dbReference>
<dbReference type="PANTHER" id="PTHR11589">
    <property type="entry name" value="NERVE GROWTH FACTOR NGF -RELATED"/>
    <property type="match status" value="1"/>
</dbReference>
<dbReference type="Pfam" id="PF00243">
    <property type="entry name" value="NGF"/>
    <property type="match status" value="1"/>
</dbReference>
<dbReference type="PIRSF" id="PIRSF001789">
    <property type="entry name" value="NGF"/>
    <property type="match status" value="1"/>
</dbReference>
<dbReference type="PRINTS" id="PR01912">
    <property type="entry name" value="BDNFACTOR"/>
</dbReference>
<dbReference type="PRINTS" id="PR00268">
    <property type="entry name" value="NGF"/>
</dbReference>
<dbReference type="SMART" id="SM00140">
    <property type="entry name" value="NGF"/>
    <property type="match status" value="1"/>
</dbReference>
<dbReference type="SUPFAM" id="SSF57501">
    <property type="entry name" value="Cystine-knot cytokines"/>
    <property type="match status" value="1"/>
</dbReference>
<dbReference type="PROSITE" id="PS00248">
    <property type="entry name" value="NGF_1"/>
    <property type="match status" value="1"/>
</dbReference>
<dbReference type="PROSITE" id="PS50270">
    <property type="entry name" value="NGF_2"/>
    <property type="match status" value="1"/>
</dbReference>
<reference key="1">
    <citation type="submission" date="1994-01" db="EMBL/GenBank/DDBJ databases">
        <authorList>
            <person name="Liu T.S."/>
            <person name="Chang G.D."/>
            <person name="Huang F.L."/>
            <person name="Lo T.B."/>
        </authorList>
    </citation>
    <scope>NUCLEOTIDE SEQUENCE [GENOMIC DNA]</scope>
    <source>
        <tissue>Liver</tissue>
    </source>
</reference>
<comment type="function">
    <text evidence="1">Promotes the survival of neuronal populations that are all located either in the central nervous system or directly connected to it.</text>
</comment>
<comment type="subcellular location">
    <subcellularLocation>
        <location>Secreted</location>
    </subcellularLocation>
</comment>
<comment type="similarity">
    <text evidence="3">Belongs to the NGF-beta family.</text>
</comment>
<proteinExistence type="inferred from homology"/>
<evidence type="ECO:0000250" key="1"/>
<evidence type="ECO:0000255" key="2"/>
<evidence type="ECO:0000305" key="3"/>